<sequence length="203" mass="23169">MSRYTGPSWKQSRRLGLSLTGTGKELARRNYVPGQHGPNNRSKLSEYGLQLAEKQKLRFSYGMGEKQFRNLFVQATKIKEGTLGFNFMLLLERRLDNVVYRLGLATTRRQARQFVNHGHILVDGKRVDIPSFRVEIGQVISVREKSMKVPAILEAVEATLGRPAFVSFDAEKLEGSLTRLPERDEINPEINEALVVEFYNKML</sequence>
<gene>
    <name evidence="1" type="primary">rpsD</name>
    <name type="ordered locus">Sez_1922</name>
</gene>
<name>RS4_STREM</name>
<accession>B4U0N4</accession>
<reference key="1">
    <citation type="journal article" date="2008" name="PLoS ONE">
        <title>Genome sequence of a lancefield group C Streptococcus zooepidemicus strain causing epidemic nephritis: new information about an old disease.</title>
        <authorList>
            <person name="Beres S.B."/>
            <person name="Sesso R."/>
            <person name="Pinto S.W.L."/>
            <person name="Hoe N.P."/>
            <person name="Porcella S.F."/>
            <person name="Deleo F.R."/>
            <person name="Musser J.M."/>
        </authorList>
    </citation>
    <scope>NUCLEOTIDE SEQUENCE [LARGE SCALE GENOMIC DNA]</scope>
    <source>
        <strain>MGCS10565</strain>
    </source>
</reference>
<feature type="chain" id="PRO_1000140795" description="Small ribosomal subunit protein uS4">
    <location>
        <begin position="1"/>
        <end position="203"/>
    </location>
</feature>
<feature type="domain" description="S4 RNA-binding" evidence="1">
    <location>
        <begin position="93"/>
        <end position="156"/>
    </location>
</feature>
<protein>
    <recommendedName>
        <fullName evidence="1">Small ribosomal subunit protein uS4</fullName>
    </recommendedName>
    <alternativeName>
        <fullName evidence="2">30S ribosomal protein S4</fullName>
    </alternativeName>
</protein>
<comment type="function">
    <text evidence="1">One of the primary rRNA binding proteins, it binds directly to 16S rRNA where it nucleates assembly of the body of the 30S subunit.</text>
</comment>
<comment type="function">
    <text evidence="1">With S5 and S12 plays an important role in translational accuracy.</text>
</comment>
<comment type="subunit">
    <text evidence="1">Part of the 30S ribosomal subunit. Contacts protein S5. The interaction surface between S4 and S5 is involved in control of translational fidelity.</text>
</comment>
<comment type="similarity">
    <text evidence="1">Belongs to the universal ribosomal protein uS4 family.</text>
</comment>
<keyword id="KW-0687">Ribonucleoprotein</keyword>
<keyword id="KW-0689">Ribosomal protein</keyword>
<keyword id="KW-0694">RNA-binding</keyword>
<keyword id="KW-0699">rRNA-binding</keyword>
<dbReference type="EMBL" id="CP001129">
    <property type="protein sequence ID" value="ACG63243.1"/>
    <property type="molecule type" value="Genomic_DNA"/>
</dbReference>
<dbReference type="RefSeq" id="WP_012516485.1">
    <property type="nucleotide sequence ID" value="NC_011134.1"/>
</dbReference>
<dbReference type="SMR" id="B4U0N4"/>
<dbReference type="GeneID" id="83705814"/>
<dbReference type="KEGG" id="sez:Sez_1922"/>
<dbReference type="HOGENOM" id="CLU_092403_0_1_9"/>
<dbReference type="Proteomes" id="UP000001873">
    <property type="component" value="Chromosome"/>
</dbReference>
<dbReference type="GO" id="GO:0015935">
    <property type="term" value="C:small ribosomal subunit"/>
    <property type="evidence" value="ECO:0007669"/>
    <property type="project" value="InterPro"/>
</dbReference>
<dbReference type="GO" id="GO:0019843">
    <property type="term" value="F:rRNA binding"/>
    <property type="evidence" value="ECO:0007669"/>
    <property type="project" value="UniProtKB-UniRule"/>
</dbReference>
<dbReference type="GO" id="GO:0003735">
    <property type="term" value="F:structural constituent of ribosome"/>
    <property type="evidence" value="ECO:0007669"/>
    <property type="project" value="InterPro"/>
</dbReference>
<dbReference type="GO" id="GO:0042274">
    <property type="term" value="P:ribosomal small subunit biogenesis"/>
    <property type="evidence" value="ECO:0007669"/>
    <property type="project" value="TreeGrafter"/>
</dbReference>
<dbReference type="GO" id="GO:0006412">
    <property type="term" value="P:translation"/>
    <property type="evidence" value="ECO:0007669"/>
    <property type="project" value="UniProtKB-UniRule"/>
</dbReference>
<dbReference type="CDD" id="cd00165">
    <property type="entry name" value="S4"/>
    <property type="match status" value="1"/>
</dbReference>
<dbReference type="FunFam" id="1.10.1050.10:FF:000001">
    <property type="entry name" value="30S ribosomal protein S4"/>
    <property type="match status" value="1"/>
</dbReference>
<dbReference type="FunFam" id="3.10.290.10:FF:000001">
    <property type="entry name" value="30S ribosomal protein S4"/>
    <property type="match status" value="1"/>
</dbReference>
<dbReference type="Gene3D" id="1.10.1050.10">
    <property type="entry name" value="Ribosomal Protein S4 Delta 41, Chain A, domain 1"/>
    <property type="match status" value="1"/>
</dbReference>
<dbReference type="Gene3D" id="3.10.290.10">
    <property type="entry name" value="RNA-binding S4 domain"/>
    <property type="match status" value="1"/>
</dbReference>
<dbReference type="HAMAP" id="MF_01306_B">
    <property type="entry name" value="Ribosomal_uS4_B"/>
    <property type="match status" value="1"/>
</dbReference>
<dbReference type="InterPro" id="IPR022801">
    <property type="entry name" value="Ribosomal_uS4"/>
</dbReference>
<dbReference type="InterPro" id="IPR005709">
    <property type="entry name" value="Ribosomal_uS4_bac-type"/>
</dbReference>
<dbReference type="InterPro" id="IPR018079">
    <property type="entry name" value="Ribosomal_uS4_CS"/>
</dbReference>
<dbReference type="InterPro" id="IPR001912">
    <property type="entry name" value="Ribosomal_uS4_N"/>
</dbReference>
<dbReference type="InterPro" id="IPR002942">
    <property type="entry name" value="S4_RNA-bd"/>
</dbReference>
<dbReference type="InterPro" id="IPR036986">
    <property type="entry name" value="S4_RNA-bd_sf"/>
</dbReference>
<dbReference type="NCBIfam" id="NF003717">
    <property type="entry name" value="PRK05327.1"/>
    <property type="match status" value="1"/>
</dbReference>
<dbReference type="NCBIfam" id="TIGR01017">
    <property type="entry name" value="rpsD_bact"/>
    <property type="match status" value="1"/>
</dbReference>
<dbReference type="PANTHER" id="PTHR11831">
    <property type="entry name" value="30S 40S RIBOSOMAL PROTEIN"/>
    <property type="match status" value="1"/>
</dbReference>
<dbReference type="PANTHER" id="PTHR11831:SF4">
    <property type="entry name" value="SMALL RIBOSOMAL SUBUNIT PROTEIN US4M"/>
    <property type="match status" value="1"/>
</dbReference>
<dbReference type="Pfam" id="PF00163">
    <property type="entry name" value="Ribosomal_S4"/>
    <property type="match status" value="1"/>
</dbReference>
<dbReference type="Pfam" id="PF01479">
    <property type="entry name" value="S4"/>
    <property type="match status" value="1"/>
</dbReference>
<dbReference type="SMART" id="SM01390">
    <property type="entry name" value="Ribosomal_S4"/>
    <property type="match status" value="1"/>
</dbReference>
<dbReference type="SMART" id="SM00363">
    <property type="entry name" value="S4"/>
    <property type="match status" value="1"/>
</dbReference>
<dbReference type="SUPFAM" id="SSF55174">
    <property type="entry name" value="Alpha-L RNA-binding motif"/>
    <property type="match status" value="1"/>
</dbReference>
<dbReference type="PROSITE" id="PS00632">
    <property type="entry name" value="RIBOSOMAL_S4"/>
    <property type="match status" value="1"/>
</dbReference>
<dbReference type="PROSITE" id="PS50889">
    <property type="entry name" value="S4"/>
    <property type="match status" value="1"/>
</dbReference>
<evidence type="ECO:0000255" key="1">
    <source>
        <dbReference type="HAMAP-Rule" id="MF_01306"/>
    </source>
</evidence>
<evidence type="ECO:0000305" key="2"/>
<organism>
    <name type="scientific">Streptococcus equi subsp. zooepidemicus (strain MGCS10565)</name>
    <dbReference type="NCBI Taxonomy" id="552526"/>
    <lineage>
        <taxon>Bacteria</taxon>
        <taxon>Bacillati</taxon>
        <taxon>Bacillota</taxon>
        <taxon>Bacilli</taxon>
        <taxon>Lactobacillales</taxon>
        <taxon>Streptococcaceae</taxon>
        <taxon>Streptococcus</taxon>
    </lineage>
</organism>
<proteinExistence type="inferred from homology"/>